<name>PROA_ACIBC</name>
<gene>
    <name evidence="1" type="primary">proA</name>
    <name type="ordered locus">ACICU_00499</name>
</gene>
<protein>
    <recommendedName>
        <fullName evidence="1">Gamma-glutamyl phosphate reductase</fullName>
        <shortName evidence="1">GPR</shortName>
        <ecNumber evidence="1">1.2.1.41</ecNumber>
    </recommendedName>
    <alternativeName>
        <fullName evidence="1">Glutamate-5-semialdehyde dehydrogenase</fullName>
    </alternativeName>
    <alternativeName>
        <fullName evidence="1">Glutamyl-gamma-semialdehyde dehydrogenase</fullName>
        <shortName evidence="1">GSA dehydrogenase</shortName>
    </alternativeName>
</protein>
<proteinExistence type="inferred from homology"/>
<reference key="1">
    <citation type="journal article" date="2008" name="Antimicrob. Agents Chemother.">
        <title>Whole-genome pyrosequencing of an epidemic multidrug-resistant Acinetobacter baumannii strain belonging to the European clone II group.</title>
        <authorList>
            <person name="Iacono M."/>
            <person name="Villa L."/>
            <person name="Fortini D."/>
            <person name="Bordoni R."/>
            <person name="Imperi F."/>
            <person name="Bonnal R.J."/>
            <person name="Sicheritz-Ponten T."/>
            <person name="De Bellis G."/>
            <person name="Visca P."/>
            <person name="Cassone A."/>
            <person name="Carattoli A."/>
        </authorList>
    </citation>
    <scope>NUCLEOTIDE SEQUENCE [LARGE SCALE GENOMIC DNA]</scope>
    <source>
        <strain>ACICU</strain>
    </source>
</reference>
<dbReference type="EC" id="1.2.1.41" evidence="1"/>
<dbReference type="EMBL" id="CP000863">
    <property type="protein sequence ID" value="ACC55811.1"/>
    <property type="molecule type" value="Genomic_DNA"/>
</dbReference>
<dbReference type="RefSeq" id="WP_001154159.1">
    <property type="nucleotide sequence ID" value="NZ_CP031380.1"/>
</dbReference>
<dbReference type="SMR" id="B2I3D3"/>
<dbReference type="KEGG" id="abc:ACICU_00499"/>
<dbReference type="HOGENOM" id="CLU_030231_0_0_6"/>
<dbReference type="UniPathway" id="UPA00098">
    <property type="reaction ID" value="UER00360"/>
</dbReference>
<dbReference type="Proteomes" id="UP000008839">
    <property type="component" value="Chromosome"/>
</dbReference>
<dbReference type="GO" id="GO:0005737">
    <property type="term" value="C:cytoplasm"/>
    <property type="evidence" value="ECO:0007669"/>
    <property type="project" value="UniProtKB-SubCell"/>
</dbReference>
<dbReference type="GO" id="GO:0004350">
    <property type="term" value="F:glutamate-5-semialdehyde dehydrogenase activity"/>
    <property type="evidence" value="ECO:0007669"/>
    <property type="project" value="UniProtKB-UniRule"/>
</dbReference>
<dbReference type="GO" id="GO:0050661">
    <property type="term" value="F:NADP binding"/>
    <property type="evidence" value="ECO:0007669"/>
    <property type="project" value="InterPro"/>
</dbReference>
<dbReference type="GO" id="GO:0055129">
    <property type="term" value="P:L-proline biosynthetic process"/>
    <property type="evidence" value="ECO:0007669"/>
    <property type="project" value="UniProtKB-UniRule"/>
</dbReference>
<dbReference type="CDD" id="cd07079">
    <property type="entry name" value="ALDH_F18-19_ProA-GPR"/>
    <property type="match status" value="1"/>
</dbReference>
<dbReference type="FunFam" id="3.40.309.10:FF:000006">
    <property type="entry name" value="Gamma-glutamyl phosphate reductase"/>
    <property type="match status" value="1"/>
</dbReference>
<dbReference type="Gene3D" id="3.40.605.10">
    <property type="entry name" value="Aldehyde Dehydrogenase, Chain A, domain 1"/>
    <property type="match status" value="1"/>
</dbReference>
<dbReference type="Gene3D" id="3.40.309.10">
    <property type="entry name" value="Aldehyde Dehydrogenase, Chain A, domain 2"/>
    <property type="match status" value="1"/>
</dbReference>
<dbReference type="HAMAP" id="MF_00412">
    <property type="entry name" value="ProA"/>
    <property type="match status" value="1"/>
</dbReference>
<dbReference type="InterPro" id="IPR016161">
    <property type="entry name" value="Ald_DH/histidinol_DH"/>
</dbReference>
<dbReference type="InterPro" id="IPR016163">
    <property type="entry name" value="Ald_DH_C"/>
</dbReference>
<dbReference type="InterPro" id="IPR016162">
    <property type="entry name" value="Ald_DH_N"/>
</dbReference>
<dbReference type="InterPro" id="IPR015590">
    <property type="entry name" value="Aldehyde_DH_dom"/>
</dbReference>
<dbReference type="InterPro" id="IPR020593">
    <property type="entry name" value="G-glutamylP_reductase_CS"/>
</dbReference>
<dbReference type="InterPro" id="IPR012134">
    <property type="entry name" value="Glu-5-SA_DH"/>
</dbReference>
<dbReference type="InterPro" id="IPR000965">
    <property type="entry name" value="GPR_dom"/>
</dbReference>
<dbReference type="NCBIfam" id="NF001221">
    <property type="entry name" value="PRK00197.1"/>
    <property type="match status" value="1"/>
</dbReference>
<dbReference type="NCBIfam" id="TIGR00407">
    <property type="entry name" value="proA"/>
    <property type="match status" value="1"/>
</dbReference>
<dbReference type="PANTHER" id="PTHR11063:SF8">
    <property type="entry name" value="DELTA-1-PYRROLINE-5-CARBOXYLATE SYNTHASE"/>
    <property type="match status" value="1"/>
</dbReference>
<dbReference type="PANTHER" id="PTHR11063">
    <property type="entry name" value="GLUTAMATE SEMIALDEHYDE DEHYDROGENASE"/>
    <property type="match status" value="1"/>
</dbReference>
<dbReference type="Pfam" id="PF00171">
    <property type="entry name" value="Aldedh"/>
    <property type="match status" value="2"/>
</dbReference>
<dbReference type="PIRSF" id="PIRSF000151">
    <property type="entry name" value="GPR"/>
    <property type="match status" value="1"/>
</dbReference>
<dbReference type="SUPFAM" id="SSF53720">
    <property type="entry name" value="ALDH-like"/>
    <property type="match status" value="1"/>
</dbReference>
<dbReference type="PROSITE" id="PS01223">
    <property type="entry name" value="PROA"/>
    <property type="match status" value="1"/>
</dbReference>
<evidence type="ECO:0000255" key="1">
    <source>
        <dbReference type="HAMAP-Rule" id="MF_00412"/>
    </source>
</evidence>
<feature type="chain" id="PRO_1000123767" description="Gamma-glutamyl phosphate reductase">
    <location>
        <begin position="1"/>
        <end position="421"/>
    </location>
</feature>
<keyword id="KW-0028">Amino-acid biosynthesis</keyword>
<keyword id="KW-0963">Cytoplasm</keyword>
<keyword id="KW-0521">NADP</keyword>
<keyword id="KW-0560">Oxidoreductase</keyword>
<keyword id="KW-0641">Proline biosynthesis</keyword>
<sequence>MQDSIEQYMQKVGQQARDASRVLTSASTSLKNHALSAIYTALENNQAAILAANQIDMEKGRSNQLDSALLDRLELTPARFKGMLQGLKDVIALVDPIGEITDLAYRPTGIQIGKMRVPLGVVGMIYESRPNVTLEAASLAIKSGNAIILRGGSEALESNKAIAEAVKHGLKVAGLPEHSVQVIETSDRAAVGHLITMAEYVDVIVPRGGKSLIERVTNEARIPVIKHLDGNCHVFVEAQADLQKALPITLNAKTHRYGVCNAMETLLVDEKIAEVFLPHIAELYAEKQVELRGCPETRRILGTTVKPATEEDWYTEYLGPILAVKVVSGIDEAIDHINKYGSHHTDAIVTENYTLARQFLARVDSSSVVVNASTRFADGFEYGLGAEIGISTDKIHARGPVGLEGLTSQKWIVLGDGQIRQ</sequence>
<accession>B2I3D3</accession>
<comment type="function">
    <text evidence="1">Catalyzes the NADPH-dependent reduction of L-glutamate 5-phosphate into L-glutamate 5-semialdehyde and phosphate. The product spontaneously undergoes cyclization to form 1-pyrroline-5-carboxylate.</text>
</comment>
<comment type="catalytic activity">
    <reaction evidence="1">
        <text>L-glutamate 5-semialdehyde + phosphate + NADP(+) = L-glutamyl 5-phosphate + NADPH + H(+)</text>
        <dbReference type="Rhea" id="RHEA:19541"/>
        <dbReference type="ChEBI" id="CHEBI:15378"/>
        <dbReference type="ChEBI" id="CHEBI:43474"/>
        <dbReference type="ChEBI" id="CHEBI:57783"/>
        <dbReference type="ChEBI" id="CHEBI:58066"/>
        <dbReference type="ChEBI" id="CHEBI:58274"/>
        <dbReference type="ChEBI" id="CHEBI:58349"/>
        <dbReference type="EC" id="1.2.1.41"/>
    </reaction>
</comment>
<comment type="pathway">
    <text evidence="1">Amino-acid biosynthesis; L-proline biosynthesis; L-glutamate 5-semialdehyde from L-glutamate: step 2/2.</text>
</comment>
<comment type="subcellular location">
    <subcellularLocation>
        <location evidence="1">Cytoplasm</location>
    </subcellularLocation>
</comment>
<comment type="similarity">
    <text evidence="1">Belongs to the gamma-glutamyl phosphate reductase family.</text>
</comment>
<organism>
    <name type="scientific">Acinetobacter baumannii (strain ACICU)</name>
    <dbReference type="NCBI Taxonomy" id="405416"/>
    <lineage>
        <taxon>Bacteria</taxon>
        <taxon>Pseudomonadati</taxon>
        <taxon>Pseudomonadota</taxon>
        <taxon>Gammaproteobacteria</taxon>
        <taxon>Moraxellales</taxon>
        <taxon>Moraxellaceae</taxon>
        <taxon>Acinetobacter</taxon>
        <taxon>Acinetobacter calcoaceticus/baumannii complex</taxon>
    </lineage>
</organism>